<sequence>MARTKQTARKATAWQAPRKPLATKAARKRASPTGGIKKPHRYKPGTLALREIRKYQKSTQLLLRKLPFQRLVREIAQAISPDLRFQSAAIGALQEASEAYLVQLFEDTNLCAIHARRVTIMPRDMQLARRLRGEGAGEPTLLGNLAL</sequence>
<evidence type="ECO:0000250" key="1">
    <source>
        <dbReference type="UniProtKB" id="P68431"/>
    </source>
</evidence>
<evidence type="ECO:0000250" key="2">
    <source>
        <dbReference type="UniProtKB" id="P68433"/>
    </source>
</evidence>
<evidence type="ECO:0000250" key="3">
    <source>
        <dbReference type="UniProtKB" id="P84243"/>
    </source>
</evidence>
<evidence type="ECO:0000250" key="4">
    <source>
        <dbReference type="UniProtKB" id="P84244"/>
    </source>
</evidence>
<evidence type="ECO:0000250" key="5">
    <source>
        <dbReference type="UniProtKB" id="Q71DI3"/>
    </source>
</evidence>
<evidence type="ECO:0000256" key="6">
    <source>
        <dbReference type="SAM" id="MobiDB-lite"/>
    </source>
</evidence>
<evidence type="ECO:0000269" key="7">
    <source>
    </source>
</evidence>
<evidence type="ECO:0000303" key="8">
    <source>
    </source>
</evidence>
<evidence type="ECO:0000305" key="9"/>
<evidence type="ECO:0000305" key="10">
    <source>
    </source>
</evidence>
<evidence type="ECO:0000312" key="11">
    <source>
        <dbReference type="HGNC" id="HGNC:43734"/>
    </source>
</evidence>
<evidence type="ECO:0007829" key="12">
    <source>
        <dbReference type="PDB" id="7ZDD"/>
    </source>
</evidence>
<reference key="1">
    <citation type="journal article" date="2004" name="Nature">
        <title>The DNA sequence and comparative analysis of human chromosome 5.</title>
        <authorList>
            <person name="Schmutz J."/>
            <person name="Martin J."/>
            <person name="Terry A."/>
            <person name="Couronne O."/>
            <person name="Grimwood J."/>
            <person name="Lowry S."/>
            <person name="Gordon L.A."/>
            <person name="Scott D."/>
            <person name="Xie G."/>
            <person name="Huang W."/>
            <person name="Hellsten U."/>
            <person name="Tran-Gyamfi M."/>
            <person name="She X."/>
            <person name="Prabhakar S."/>
            <person name="Aerts A."/>
            <person name="Altherr M."/>
            <person name="Bajorek E."/>
            <person name="Black S."/>
            <person name="Branscomb E."/>
            <person name="Caoile C."/>
            <person name="Challacombe J.F."/>
            <person name="Chan Y.M."/>
            <person name="Denys M."/>
            <person name="Detter J.C."/>
            <person name="Escobar J."/>
            <person name="Flowers D."/>
            <person name="Fotopulos D."/>
            <person name="Glavina T."/>
            <person name="Gomez M."/>
            <person name="Gonzales E."/>
            <person name="Goodstein D."/>
            <person name="Grigoriev I."/>
            <person name="Groza M."/>
            <person name="Hammon N."/>
            <person name="Hawkins T."/>
            <person name="Haydu L."/>
            <person name="Israni S."/>
            <person name="Jett J."/>
            <person name="Kadner K."/>
            <person name="Kimball H."/>
            <person name="Kobayashi A."/>
            <person name="Lopez F."/>
            <person name="Lou Y."/>
            <person name="Martinez D."/>
            <person name="Medina C."/>
            <person name="Morgan J."/>
            <person name="Nandkeshwar R."/>
            <person name="Noonan J.P."/>
            <person name="Pitluck S."/>
            <person name="Pollard M."/>
            <person name="Predki P."/>
            <person name="Priest J."/>
            <person name="Ramirez L."/>
            <person name="Retterer J."/>
            <person name="Rodriguez A."/>
            <person name="Rogers S."/>
            <person name="Salamov A."/>
            <person name="Salazar A."/>
            <person name="Thayer N."/>
            <person name="Tice H."/>
            <person name="Tsai M."/>
            <person name="Ustaszewska A."/>
            <person name="Vo N."/>
            <person name="Wheeler J."/>
            <person name="Wu K."/>
            <person name="Yang J."/>
            <person name="Dickson M."/>
            <person name="Cheng J.-F."/>
            <person name="Eichler E.E."/>
            <person name="Olsen A."/>
            <person name="Pennacchio L.A."/>
            <person name="Rokhsar D.S."/>
            <person name="Richardson P."/>
            <person name="Lucas S.M."/>
            <person name="Myers R.M."/>
            <person name="Rubin E.M."/>
        </authorList>
    </citation>
    <scope>NUCLEOTIDE SEQUENCE [LARGE SCALE GENOMIC DNA]</scope>
</reference>
<reference key="2">
    <citation type="journal article" date="2010" name="J. Cell Biol.">
        <title>Identification and characterization of two novel primate-specific histone H3 variants, H3.X and H3.Y.</title>
        <authorList>
            <person name="Wiedemann S.M."/>
            <person name="Mildner S.N."/>
            <person name="Boenisch C."/>
            <person name="Israel L."/>
            <person name="Maiser A."/>
            <person name="Matheisl S."/>
            <person name="Straub T."/>
            <person name="Merkl R."/>
            <person name="Leonhardt H."/>
            <person name="Kremmer E."/>
            <person name="Schermelleh L."/>
            <person name="Hake S.B."/>
        </authorList>
    </citation>
    <scope>FUNCTION</scope>
    <scope>SUBCELLULAR LOCATION</scope>
    <scope>SUBUNIT</scope>
    <scope>TISSUE SPECIFICITY</scope>
</reference>
<name>H3Y2_HUMAN</name>
<dbReference type="EMBL" id="AC233724">
    <property type="status" value="NOT_ANNOTATED_CDS"/>
    <property type="molecule type" value="Genomic_DNA"/>
</dbReference>
<dbReference type="CCDS" id="CCDS93687.1"/>
<dbReference type="RefSeq" id="NP_001358848.1">
    <property type="nucleotide sequence ID" value="NM_001371919.1"/>
</dbReference>
<dbReference type="PDB" id="7ZDD">
    <property type="method" value="X-ray"/>
    <property type="resolution" value="1.62 A"/>
    <property type="chains" value="D=2-11"/>
</dbReference>
<dbReference type="PDBsum" id="7ZDD"/>
<dbReference type="EMDB" id="EMD-17159"/>
<dbReference type="EMDB" id="EMD-17162"/>
<dbReference type="EMDB" id="EMD-18699"/>
<dbReference type="EMDB" id="EMD-18714"/>
<dbReference type="EMDB" id="EMD-18739"/>
<dbReference type="EMDB" id="EMD-18740"/>
<dbReference type="EMDB" id="EMD-18745"/>
<dbReference type="EMDB" id="EMD-18753"/>
<dbReference type="EMDB" id="EMD-18763"/>
<dbReference type="EMDB" id="EMD-18768"/>
<dbReference type="EMDB" id="EMD-18775"/>
<dbReference type="EMDB" id="EMD-18776"/>
<dbReference type="SMR" id="P0DPK5"/>
<dbReference type="FunCoup" id="P0DPK5">
    <property type="interactions" value="9"/>
</dbReference>
<dbReference type="STRING" id="9606.ENSP00000497053"/>
<dbReference type="jPOST" id="P0DPK5"/>
<dbReference type="MassIVE" id="P0DPK5"/>
<dbReference type="PeptideAtlas" id="P0DPK5"/>
<dbReference type="Pumba" id="P0DPK5"/>
<dbReference type="Ensembl" id="ENST00000600799.3">
    <property type="protein sequence ID" value="ENSP00000497053.1"/>
    <property type="gene ID" value="ENSG00000268799.4"/>
</dbReference>
<dbReference type="GeneID" id="340096"/>
<dbReference type="MANE-Select" id="ENST00000600799.3">
    <property type="protein sequence ID" value="ENSP00000497053.1"/>
    <property type="RefSeq nucleotide sequence ID" value="NM_001371919.1"/>
    <property type="RefSeq protein sequence ID" value="NP_001358848.1"/>
</dbReference>
<dbReference type="AGR" id="HGNC:43734"/>
<dbReference type="GeneCards" id="H3Y2"/>
<dbReference type="HGNC" id="HGNC:43734">
    <property type="gene designation" value="H3Y2"/>
</dbReference>
<dbReference type="HPA" id="ENSG00000268799">
    <property type="expression patterns" value="Not detected"/>
</dbReference>
<dbReference type="neXtProt" id="NX_P0DPK5"/>
<dbReference type="OpenTargets" id="ENSG00000268799"/>
<dbReference type="VEuPathDB" id="HostDB:ENSG00000268799"/>
<dbReference type="GeneTree" id="ENSGT01130000278322"/>
<dbReference type="InParanoid" id="P0DPK5"/>
<dbReference type="OMA" id="IMPGDMQ"/>
<dbReference type="OrthoDB" id="9530041at2759"/>
<dbReference type="PAN-GO" id="P0DPK5">
    <property type="GO annotations" value="1 GO annotation based on evolutionary models"/>
</dbReference>
<dbReference type="SIGNOR" id="P0DPK5"/>
<dbReference type="Pharos" id="P0DPK5">
    <property type="development level" value="Tdark"/>
</dbReference>
<dbReference type="Proteomes" id="UP000005640">
    <property type="component" value="Chromosome 5"/>
</dbReference>
<dbReference type="Bgee" id="ENSG00000268799">
    <property type="expression patterns" value="Expressed in primordial germ cell in gonad and 5 other cell types or tissues"/>
</dbReference>
<dbReference type="GO" id="GO:0005654">
    <property type="term" value="C:nucleoplasm"/>
    <property type="evidence" value="ECO:0000314"/>
    <property type="project" value="HPA"/>
</dbReference>
<dbReference type="GO" id="GO:0000786">
    <property type="term" value="C:nucleosome"/>
    <property type="evidence" value="ECO:0000314"/>
    <property type="project" value="UniProtKB"/>
</dbReference>
<dbReference type="GO" id="GO:0005634">
    <property type="term" value="C:nucleus"/>
    <property type="evidence" value="ECO:0000318"/>
    <property type="project" value="GO_Central"/>
</dbReference>
<dbReference type="GO" id="GO:0003677">
    <property type="term" value="F:DNA binding"/>
    <property type="evidence" value="ECO:0007669"/>
    <property type="project" value="InterPro"/>
</dbReference>
<dbReference type="GO" id="GO:0046982">
    <property type="term" value="F:protein heterodimerization activity"/>
    <property type="evidence" value="ECO:0007669"/>
    <property type="project" value="InterPro"/>
</dbReference>
<dbReference type="GO" id="GO:0030527">
    <property type="term" value="F:structural constituent of chromatin"/>
    <property type="evidence" value="ECO:0007669"/>
    <property type="project" value="InterPro"/>
</dbReference>
<dbReference type="CDD" id="cd22911">
    <property type="entry name" value="HFD_H3"/>
    <property type="match status" value="1"/>
</dbReference>
<dbReference type="FunFam" id="1.10.20.10:FF:000001">
    <property type="entry name" value="Histone H3"/>
    <property type="match status" value="1"/>
</dbReference>
<dbReference type="Gene3D" id="1.10.20.10">
    <property type="entry name" value="Histone, subunit A"/>
    <property type="match status" value="1"/>
</dbReference>
<dbReference type="InterPro" id="IPR009072">
    <property type="entry name" value="Histone-fold"/>
</dbReference>
<dbReference type="InterPro" id="IPR007125">
    <property type="entry name" value="Histone_H2A/H2B/H3"/>
</dbReference>
<dbReference type="InterPro" id="IPR000164">
    <property type="entry name" value="Histone_H3/CENP-A"/>
</dbReference>
<dbReference type="PANTHER" id="PTHR11426">
    <property type="entry name" value="HISTONE H3"/>
    <property type="match status" value="1"/>
</dbReference>
<dbReference type="Pfam" id="PF00125">
    <property type="entry name" value="Histone"/>
    <property type="match status" value="1"/>
</dbReference>
<dbReference type="PRINTS" id="PR00622">
    <property type="entry name" value="HISTONEH3"/>
</dbReference>
<dbReference type="SMART" id="SM00428">
    <property type="entry name" value="H3"/>
    <property type="match status" value="1"/>
</dbReference>
<dbReference type="SUPFAM" id="SSF47113">
    <property type="entry name" value="Histone-fold"/>
    <property type="match status" value="1"/>
</dbReference>
<dbReference type="PROSITE" id="PS00959">
    <property type="entry name" value="HISTONE_H3_2"/>
    <property type="match status" value="1"/>
</dbReference>
<proteinExistence type="evidence at protein level"/>
<gene>
    <name evidence="11" type="primary">H3Y2</name>
</gene>
<organism>
    <name type="scientific">Homo sapiens</name>
    <name type="common">Human</name>
    <dbReference type="NCBI Taxonomy" id="9606"/>
    <lineage>
        <taxon>Eukaryota</taxon>
        <taxon>Metazoa</taxon>
        <taxon>Chordata</taxon>
        <taxon>Craniata</taxon>
        <taxon>Vertebrata</taxon>
        <taxon>Euteleostomi</taxon>
        <taxon>Mammalia</taxon>
        <taxon>Eutheria</taxon>
        <taxon>Euarchontoglires</taxon>
        <taxon>Primates</taxon>
        <taxon>Haplorrhini</taxon>
        <taxon>Catarrhini</taxon>
        <taxon>Hominidae</taxon>
        <taxon>Homo</taxon>
    </lineage>
</organism>
<feature type="initiator methionine" description="Removed" evidence="3">
    <location>
        <position position="1"/>
    </location>
</feature>
<feature type="chain" id="PRO_0000445073" description="Histone H3.X">
    <location>
        <begin position="2"/>
        <end position="147"/>
    </location>
</feature>
<feature type="region of interest" description="Disordered" evidence="6">
    <location>
        <begin position="1"/>
        <end position="43"/>
    </location>
</feature>
<feature type="compositionally biased region" description="Low complexity" evidence="6">
    <location>
        <begin position="1"/>
        <end position="16"/>
    </location>
</feature>
<feature type="modified residue" description="Asymmetric dimethylarginine" evidence="3">
    <location>
        <position position="3"/>
    </location>
</feature>
<feature type="modified residue" description="Citrulline; alternate" evidence="3">
    <location>
        <position position="3"/>
    </location>
</feature>
<feature type="modified residue" description="Phosphothreonine" evidence="3">
    <location>
        <position position="4"/>
    </location>
</feature>
<feature type="modified residue" description="Allysine; alternate" evidence="3">
    <location>
        <position position="5"/>
    </location>
</feature>
<feature type="modified residue" description="N6,N6,N6-trimethyllysine; alternate" evidence="3">
    <location>
        <position position="5"/>
    </location>
</feature>
<feature type="modified residue" description="N6,N6-dimethyllysine; alternate" evidence="3">
    <location>
        <position position="5"/>
    </location>
</feature>
<feature type="modified residue" description="N6-(2-hydroxyisobutyryl)lysine; alternate" evidence="3">
    <location>
        <position position="5"/>
    </location>
</feature>
<feature type="modified residue" description="N6-(beta-hydroxybutyryl)lysine; alternate" evidence="3">
    <location>
        <position position="5"/>
    </location>
</feature>
<feature type="modified residue" description="N6-acetyllysine; alternate" evidence="3">
    <location>
        <position position="5"/>
    </location>
</feature>
<feature type="modified residue" description="N6-crotonyllysine; alternate" evidence="3">
    <location>
        <position position="5"/>
    </location>
</feature>
<feature type="modified residue" description="N6-methyllysine; alternate" evidence="3">
    <location>
        <position position="5"/>
    </location>
</feature>
<feature type="modified residue" description="5-glutamyl dopamine; alternate" evidence="1">
    <location>
        <position position="6"/>
    </location>
</feature>
<feature type="modified residue" description="5-glutamyl serotonin; alternate" evidence="1">
    <location>
        <position position="6"/>
    </location>
</feature>
<feature type="modified residue" description="Phosphothreonine" evidence="3">
    <location>
        <position position="7"/>
    </location>
</feature>
<feature type="modified residue" description="Citrulline; alternate" evidence="3">
    <location>
        <position position="9"/>
    </location>
</feature>
<feature type="modified residue" description="Symmetric dimethylarginine" evidence="4">
    <location>
        <position position="9"/>
    </location>
</feature>
<feature type="modified residue" description="N6,N6,N6-trimethyllysine; alternate" evidence="3">
    <location>
        <position position="10"/>
    </location>
</feature>
<feature type="modified residue" description="N6,N6-dimethyllysine; alternate" evidence="3">
    <location>
        <position position="10"/>
    </location>
</feature>
<feature type="modified residue" description="N6-(2-hydroxyisobutyryl)lysine; alternate" evidence="3">
    <location>
        <position position="10"/>
    </location>
</feature>
<feature type="modified residue" description="N6-(beta-hydroxybutyryl)lysine; alternate" evidence="3">
    <location>
        <position position="10"/>
    </location>
</feature>
<feature type="modified residue" description="N6-acetyllysine; alternate" evidence="3">
    <location>
        <position position="10"/>
    </location>
</feature>
<feature type="modified residue" description="N6-butyryllysine; alternate" evidence="3">
    <location>
        <position position="10"/>
    </location>
</feature>
<feature type="modified residue" description="N6-crotonyllysine; alternate" evidence="3">
    <location>
        <position position="10"/>
    </location>
</feature>
<feature type="modified residue" description="N6-lactoyllysine; alternate" evidence="1">
    <location>
        <position position="10"/>
    </location>
</feature>
<feature type="modified residue" description="N6-methyllysine; alternate" evidence="3">
    <location>
        <position position="10"/>
    </location>
</feature>
<feature type="modified residue" description="Phosphothreonine" evidence="3">
    <location>
        <position position="12"/>
    </location>
</feature>
<feature type="modified residue" description="Asymmetric dimethylarginine" evidence="3">
    <location>
        <position position="18"/>
    </location>
</feature>
<feature type="modified residue" description="Citrulline; alternate" evidence="3">
    <location>
        <position position="18"/>
    </location>
</feature>
<feature type="modified residue" description="N6-(2-hydroxyisobutyryl)lysine; alternate" evidence="3">
    <location>
        <position position="19"/>
    </location>
</feature>
<feature type="modified residue" description="N6-(beta-hydroxybutyryl)lysine; alternate" evidence="3">
    <location>
        <position position="19"/>
    </location>
</feature>
<feature type="modified residue" description="N6-acetyllysine; alternate" evidence="3">
    <location>
        <position position="19"/>
    </location>
</feature>
<feature type="modified residue" description="N6-butyryllysine; alternate" evidence="3">
    <location>
        <position position="19"/>
    </location>
</feature>
<feature type="modified residue" description="N6-crotonyllysine; alternate" evidence="3">
    <location>
        <position position="19"/>
    </location>
</feature>
<feature type="modified residue" description="N6-glutaryllysine; alternate" evidence="3">
    <location>
        <position position="19"/>
    </location>
</feature>
<feature type="modified residue" description="N6-lactoyllysine; alternate" evidence="1">
    <location>
        <position position="19"/>
    </location>
</feature>
<feature type="modified residue" description="N6-methyllysine; alternate" evidence="3">
    <location>
        <position position="19"/>
    </location>
</feature>
<feature type="modified residue" description="N6-(2-hydroxyisobutyryl)lysine; alternate" evidence="3">
    <location>
        <position position="24"/>
    </location>
</feature>
<feature type="modified residue" description="N6-(beta-hydroxybutyryl)lysine; alternate" evidence="3">
    <location>
        <position position="24"/>
    </location>
</feature>
<feature type="modified residue" description="N6-acetyllysine; alternate" evidence="3">
    <location>
        <position position="24"/>
    </location>
</feature>
<feature type="modified residue" description="N6-butyryllysine; alternate" evidence="3">
    <location>
        <position position="24"/>
    </location>
</feature>
<feature type="modified residue" description="N6-crotonyllysine; alternate" evidence="3">
    <location>
        <position position="24"/>
    </location>
</feature>
<feature type="modified residue" description="N6-glutaryllysine; alternate" evidence="3">
    <location>
        <position position="24"/>
    </location>
</feature>
<feature type="modified residue" description="N6-lactoyllysine; alternate" evidence="1">
    <location>
        <position position="24"/>
    </location>
</feature>
<feature type="modified residue" description="N6-methyllysine; alternate" evidence="3">
    <location>
        <position position="24"/>
    </location>
</feature>
<feature type="modified residue" description="Citrulline" evidence="3">
    <location>
        <position position="27"/>
    </location>
</feature>
<feature type="modified residue" description="N6,N6,N6-trimethyllysine; alternate" evidence="3">
    <location>
        <position position="28"/>
    </location>
</feature>
<feature type="modified residue" description="N6,N6-dimethyllysine; alternate" evidence="3">
    <location>
        <position position="28"/>
    </location>
</feature>
<feature type="modified residue" description="N6-(2-hydroxyisobutyryl)lysine; alternate" evidence="3">
    <location>
        <position position="28"/>
    </location>
</feature>
<feature type="modified residue" description="N6-(beta-hydroxybutyryl)lysine; alternate" evidence="3">
    <location>
        <position position="28"/>
    </location>
</feature>
<feature type="modified residue" description="N6-acetyllysine; alternate" evidence="3">
    <location>
        <position position="28"/>
    </location>
</feature>
<feature type="modified residue" description="N6-crotonyllysine; alternate" evidence="3">
    <location>
        <position position="28"/>
    </location>
</feature>
<feature type="modified residue" description="N6-glutaryllysine; alternate" evidence="3">
    <location>
        <position position="28"/>
    </location>
</feature>
<feature type="modified residue" description="N6-lactoyllysine; alternate" evidence="1">
    <location>
        <position position="28"/>
    </location>
</feature>
<feature type="modified residue" description="N6-methyllysine; alternate" evidence="3">
    <location>
        <position position="28"/>
    </location>
</feature>
<feature type="modified residue" description="N6,N6,N6-trimethyllysine; alternate" evidence="3">
    <location>
        <position position="37"/>
    </location>
</feature>
<feature type="modified residue" description="N6,N6-dimethyllysine; alternate" evidence="3">
    <location>
        <position position="37"/>
    </location>
</feature>
<feature type="modified residue" description="N6-(2-hydroxyisobutyryl)lysine; alternate" evidence="3">
    <location>
        <position position="37"/>
    </location>
</feature>
<feature type="modified residue" description="N6-acetyllysine; alternate" evidence="3">
    <location>
        <position position="37"/>
    </location>
</feature>
<feature type="modified residue" description="N6-methyllysine; alternate" evidence="3">
    <location>
        <position position="37"/>
    </location>
</feature>
<feature type="modified residue" description="N6-methyllysine" evidence="1">
    <location>
        <position position="38"/>
    </location>
</feature>
<feature type="modified residue" description="Phosphotyrosine" evidence="3">
    <location>
        <position position="42"/>
    </location>
</feature>
<feature type="modified residue" description="N6,N6,N6-trimethyllysine; alternate" evidence="3">
    <location>
        <position position="57"/>
    </location>
</feature>
<feature type="modified residue" description="N6-(2-hydroxyisobutyryl)lysine; alternate" evidence="3">
    <location>
        <position position="57"/>
    </location>
</feature>
<feature type="modified residue" description="N6-(beta-hydroxybutyryl)lysine; alternate" evidence="3">
    <location>
        <position position="57"/>
    </location>
</feature>
<feature type="modified residue" description="N6-acetyllysine; alternate" evidence="3">
    <location>
        <position position="57"/>
    </location>
</feature>
<feature type="modified residue" description="N6-crotonyllysine; alternate" evidence="3">
    <location>
        <position position="57"/>
    </location>
</feature>
<feature type="modified residue" description="N6-glutaryllysine; alternate" evidence="3">
    <location>
        <position position="57"/>
    </location>
</feature>
<feature type="modified residue" description="N6-lactoyllysine; alternate" evidence="2">
    <location>
        <position position="57"/>
    </location>
</feature>
<feature type="modified residue" description="N6-methyllysine" evidence="3">
    <location>
        <position position="57"/>
    </location>
</feature>
<feature type="modified residue" description="N6-succinyllysine; alternate" evidence="3">
    <location>
        <position position="57"/>
    </location>
</feature>
<feature type="modified residue" description="Phosphoserine" evidence="3">
    <location>
        <position position="58"/>
    </location>
</feature>
<feature type="modified residue" description="N6-(2-hydroxyisobutyryl)lysine; alternate" evidence="3">
    <location>
        <position position="65"/>
    </location>
</feature>
<feature type="modified residue" description="N6-methyllysine; alternate" evidence="3">
    <location>
        <position position="65"/>
    </location>
</feature>
<feature type="modified residue" description="Phosphoserine" evidence="3">
    <location>
        <position position="87"/>
    </location>
</feature>
<feature type="modified residue" description="Phosphothreonine" evidence="5">
    <location>
        <position position="108"/>
    </location>
</feature>
<feature type="strand" evidence="12">
    <location>
        <begin position="4"/>
        <end position="7"/>
    </location>
</feature>
<comment type="function">
    <text evidence="7 9">Primate-specific variant histone H3, which constitutes a core component of nucleosomes (PubMed:20819935). Nucleosomes wrap and compact DNA into chromatin, limiting DNA accessibility to the cellular machineries which require DNA as a template. Histones thereby play a central role in transcription regulation, DNA repair, DNA replication and chromosomal stability. DNA accessibility is regulated via a complex set of post-translational modifications of histones, also called histone code, and nucleosome remodeling (Probable).</text>
</comment>
<comment type="subunit">
    <text evidence="7 9">The nucleosome is a histone octamer containing two molecules each of H2A, H2B, H3 and H4 assembled in one H3-H4 heterotetramer and two H2A-H2B heterodimers (PubMed:20819935). The octamer wraps approximately 147 bp of DNA (Probable).</text>
</comment>
<comment type="subcellular location">
    <subcellularLocation>
        <location evidence="7">Nucleus</location>
    </subcellularLocation>
    <subcellularLocation>
        <location evidence="10">Chromosome</location>
    </subcellularLocation>
</comment>
<comment type="tissue specificity">
    <text evidence="7">Expressed at low level in some tissues, such as testis and brain.</text>
</comment>
<comment type="PTM">
    <text evidence="3">Acetylation is generally linked to gene activation. Acetylation on Lys-10 (H3K9ac) impairs methylation at Arg-9 (H3R8me2s). Acetylation on Lys-19 (H3K18ac) and Lys-24 (H3K24ac) favors methylation at Arg-18 (H3R17me).</text>
</comment>
<comment type="PTM">
    <text evidence="3">Citrullination at Arg-9 (H3R8ci) and/or Arg-18 (H3R17ci) impairs methylation and represses transcription.</text>
</comment>
<comment type="PTM">
    <text evidence="3">Asymmetric dimethylation at Arg-18 (H3R17me2a) is linked to gene activation. Symmetric dimethylation at Arg-9 (H3R8me2s) is linked to gene repression. Asymmetric dimethylation at Arg-3 (H3R2me2a) is linked to gene repression and is mutually exclusive with H3 Lys-5 methylation (H3K4me2 and H3K4me3). H3R2me2a is present at the 3' of genes regardless of their transcription state and is enriched on inactive promoters, while it is absent on active promoters.</text>
</comment>
<comment type="PTM">
    <text evidence="3">Methylation at Lys-5 (H3K4me) facilitates subsequent acetylation of H3 and H4. Methylation at Lys-10 (H3K9me) and Lys-28 (H3K27me), which are linked to gene repression, are underrepresented. Methylation at Lys-10 (H3K9me) is a specific target for HP1 proteins (CBX1, CBX3 and CBX5) and prevents subsequent acetylation of H3 and H4.</text>
</comment>
<comment type="PTM">
    <text evidence="3">Phosphorylation at Thr-7 (H3T6ph) is a specific tag for epigenetic transcriptional activation that prevents demethylation of Lys-5 (H3K4me) by LSD1/KDM1A. At centromeres, specifically phosphorylated at Thr-12 (H3T11ph) from prophase to early anaphase. Phosphorylation at Thr-12 (H3T11ph) is a specific tag for epigenetic transcriptional activation that promotes demethylation of Lys-10 (H3K9me). Phosphorylation at Tyr-42 (H3Y41ph) promotes exclusion of CBX5 (HP1 alpha) from chromatin.</text>
</comment>
<comment type="PTM">
    <text evidence="3">Lysine deamination at Lys-5 (H3K4all) to form allysine. Allysine formation only takes place on H3K4me3 and results in gene repression.</text>
</comment>
<comment type="PTM">
    <text evidence="3">Crotonylation (Kcr) is specifically present in male germ cells and marks testis-specific genes in post-meiotic cells, including X-linked genes that escape sex chromosome inactivation in haploid cells. Crotonylation marks active promoters and enhancers and confers resistance to transcriptional repressors. It is also associated with post-meiotically activated genes on autosomes.</text>
</comment>
<comment type="PTM">
    <text evidence="2">Butyrylation of histones marks active promoters and competes with histone acetylation. It is present during late spermatogenesis.</text>
</comment>
<comment type="similarity">
    <text evidence="9">Belongs to the histone H3 family.</text>
</comment>
<accession>P0DPK5</accession>
<keyword id="KW-0002">3D-structure</keyword>
<keyword id="KW-0007">Acetylation</keyword>
<keyword id="KW-0158">Chromosome</keyword>
<keyword id="KW-0164">Citrullination</keyword>
<keyword id="KW-0379">Hydroxylation</keyword>
<keyword id="KW-0488">Methylation</keyword>
<keyword id="KW-0539">Nucleus</keyword>
<keyword id="KW-0597">Phosphoprotein</keyword>
<keyword id="KW-1185">Reference proteome</keyword>
<protein>
    <recommendedName>
        <fullName evidence="8">Histone H3.X</fullName>
    </recommendedName>
    <alternativeName>
        <fullName evidence="9">Histone H3.Y2</fullName>
    </alternativeName>
</protein>